<protein>
    <recommendedName>
        <fullName evidence="1">Thiamine thiazole synthase</fullName>
        <ecNumber evidence="1">2.4.2.59</ecNumber>
    </recommendedName>
</protein>
<reference key="1">
    <citation type="submission" date="2007-10" db="EMBL/GenBank/DDBJ databases">
        <title>Complete sequence of Methanococcus maripaludis C6.</title>
        <authorList>
            <consortium name="US DOE Joint Genome Institute"/>
            <person name="Copeland A."/>
            <person name="Lucas S."/>
            <person name="Lapidus A."/>
            <person name="Barry K."/>
            <person name="Glavina del Rio T."/>
            <person name="Dalin E."/>
            <person name="Tice H."/>
            <person name="Pitluck S."/>
            <person name="Clum A."/>
            <person name="Schmutz J."/>
            <person name="Larimer F."/>
            <person name="Land M."/>
            <person name="Hauser L."/>
            <person name="Kyrpides N."/>
            <person name="Mikhailova N."/>
            <person name="Sieprawska-Lupa M."/>
            <person name="Whitman W.B."/>
            <person name="Richardson P."/>
        </authorList>
    </citation>
    <scope>NUCLEOTIDE SEQUENCE [LARGE SCALE GENOMIC DNA]</scope>
    <source>
        <strain>C6 / ATCC BAA-1332</strain>
    </source>
</reference>
<organism>
    <name type="scientific">Methanococcus maripaludis (strain C6 / ATCC BAA-1332)</name>
    <dbReference type="NCBI Taxonomy" id="444158"/>
    <lineage>
        <taxon>Archaea</taxon>
        <taxon>Methanobacteriati</taxon>
        <taxon>Methanobacteriota</taxon>
        <taxon>Methanomada group</taxon>
        <taxon>Methanococci</taxon>
        <taxon>Methanococcales</taxon>
        <taxon>Methanococcaceae</taxon>
        <taxon>Methanococcus</taxon>
    </lineage>
</organism>
<accession>A9A9W1</accession>
<sequence length="261" mass="27919">MDGKLRADEVAVTKSILKSTFNMWMDIIDVDVVIVGAGPSGLTAAKYLAQKGFKTVVLERHLSFGGGTWGGGMGFPNIVVEKPADDILREAGIKLDEVDGEEELFTADSVEVPAKLGVAAIDAGAKILTGIVVEDLILKEDKIAGVVIQSYAIEKAGLHIDPLTISAKYVIDSTGHDASAVHTLARKNKDLGIEVPGEKSMWAEKGENSLTRNTREIFPGLYVCGMAANAYHAGYRMGAIFGGMYLSGKKCAEMILEKMEK</sequence>
<name>THI4_METM6</name>
<dbReference type="EC" id="2.4.2.59" evidence="1"/>
<dbReference type="EMBL" id="CP000867">
    <property type="protein sequence ID" value="ABX02134.1"/>
    <property type="molecule type" value="Genomic_DNA"/>
</dbReference>
<dbReference type="SMR" id="A9A9W1"/>
<dbReference type="STRING" id="444158.MmarC6_1321"/>
<dbReference type="KEGG" id="mmx:MmarC6_1321"/>
<dbReference type="eggNOG" id="arCOG00574">
    <property type="taxonomic scope" value="Archaea"/>
</dbReference>
<dbReference type="HOGENOM" id="CLU_053727_2_0_2"/>
<dbReference type="OrthoDB" id="4240at2157"/>
<dbReference type="PhylomeDB" id="A9A9W1"/>
<dbReference type="UniPathway" id="UPA00060"/>
<dbReference type="GO" id="GO:0005506">
    <property type="term" value="F:iron ion binding"/>
    <property type="evidence" value="ECO:0007669"/>
    <property type="project" value="UniProtKB-UniRule"/>
</dbReference>
<dbReference type="GO" id="GO:0016763">
    <property type="term" value="F:pentosyltransferase activity"/>
    <property type="evidence" value="ECO:0007669"/>
    <property type="project" value="UniProtKB-UniRule"/>
</dbReference>
<dbReference type="GO" id="GO:0009228">
    <property type="term" value="P:thiamine biosynthetic process"/>
    <property type="evidence" value="ECO:0007669"/>
    <property type="project" value="UniProtKB-KW"/>
</dbReference>
<dbReference type="GO" id="GO:0009229">
    <property type="term" value="P:thiamine diphosphate biosynthetic process"/>
    <property type="evidence" value="ECO:0007669"/>
    <property type="project" value="UniProtKB-UniRule"/>
</dbReference>
<dbReference type="GO" id="GO:0052837">
    <property type="term" value="P:thiazole biosynthetic process"/>
    <property type="evidence" value="ECO:0007669"/>
    <property type="project" value="UniProtKB-UniRule"/>
</dbReference>
<dbReference type="Gene3D" id="3.50.50.60">
    <property type="entry name" value="FAD/NAD(P)-binding domain"/>
    <property type="match status" value="1"/>
</dbReference>
<dbReference type="HAMAP" id="MF_00304">
    <property type="entry name" value="Thi4"/>
    <property type="match status" value="1"/>
</dbReference>
<dbReference type="InterPro" id="IPR036188">
    <property type="entry name" value="FAD/NAD-bd_sf"/>
</dbReference>
<dbReference type="InterPro" id="IPR002922">
    <property type="entry name" value="Thi4_fam"/>
</dbReference>
<dbReference type="InterPro" id="IPR022828">
    <property type="entry name" value="Thi4_prok"/>
</dbReference>
<dbReference type="NCBIfam" id="TIGR00292">
    <property type="entry name" value="sulfide-dependent adenosine diphosphate thiazole synthase"/>
    <property type="match status" value="1"/>
</dbReference>
<dbReference type="PANTHER" id="PTHR43422">
    <property type="entry name" value="THIAMINE THIAZOLE SYNTHASE"/>
    <property type="match status" value="1"/>
</dbReference>
<dbReference type="PANTHER" id="PTHR43422:SF3">
    <property type="entry name" value="THIAMINE THIAZOLE SYNTHASE"/>
    <property type="match status" value="1"/>
</dbReference>
<dbReference type="Pfam" id="PF01946">
    <property type="entry name" value="Thi4"/>
    <property type="match status" value="1"/>
</dbReference>
<dbReference type="PRINTS" id="PR00420">
    <property type="entry name" value="RNGMNOXGNASE"/>
</dbReference>
<dbReference type="SUPFAM" id="SSF51905">
    <property type="entry name" value="FAD/NAD(P)-binding domain"/>
    <property type="match status" value="1"/>
</dbReference>
<proteinExistence type="inferred from homology"/>
<comment type="function">
    <text evidence="1">Involved in the biosynthesis of the thiazole moiety of thiamine. Catalyzes the conversion of NAD and glycine to adenosine diphosphate 5-(2-hydroxyethyl)-4-methylthiazole-2-carboxylate (ADT), an adenylated thiazole intermediate, using free sulfide as a source of sulfur.</text>
</comment>
<comment type="catalytic activity">
    <reaction evidence="1">
        <text>hydrogen sulfide + glycine + NAD(+) = ADP-5-ethyl-4-methylthiazole-2-carboxylate + nicotinamide + 3 H2O + H(+)</text>
        <dbReference type="Rhea" id="RHEA:55704"/>
        <dbReference type="ChEBI" id="CHEBI:15377"/>
        <dbReference type="ChEBI" id="CHEBI:15378"/>
        <dbReference type="ChEBI" id="CHEBI:17154"/>
        <dbReference type="ChEBI" id="CHEBI:29919"/>
        <dbReference type="ChEBI" id="CHEBI:57305"/>
        <dbReference type="ChEBI" id="CHEBI:57540"/>
        <dbReference type="ChEBI" id="CHEBI:139151"/>
        <dbReference type="EC" id="2.4.2.59"/>
    </reaction>
</comment>
<comment type="cofactor">
    <cofactor evidence="1">
        <name>Fe(2+)</name>
        <dbReference type="ChEBI" id="CHEBI:29033"/>
    </cofactor>
</comment>
<comment type="pathway">
    <text evidence="1">Cofactor biosynthesis; thiamine diphosphate biosynthesis.</text>
</comment>
<comment type="subunit">
    <text evidence="1">Homooctamer; tetramer of dimers.</text>
</comment>
<comment type="similarity">
    <text evidence="1">Belongs to the THI4 family.</text>
</comment>
<gene>
    <name evidence="1" type="primary">thi4</name>
    <name type="ordered locus">MmarC6_1321</name>
</gene>
<keyword id="KW-0408">Iron</keyword>
<keyword id="KW-0479">Metal-binding</keyword>
<keyword id="KW-0520">NAD</keyword>
<keyword id="KW-0784">Thiamine biosynthesis</keyword>
<keyword id="KW-0808">Transferase</keyword>
<feature type="chain" id="PRO_1000115611" description="Thiamine thiazole synthase">
    <location>
        <begin position="1"/>
        <end position="261"/>
    </location>
</feature>
<feature type="binding site" description="in other chain" evidence="1">
    <location>
        <position position="40"/>
    </location>
    <ligand>
        <name>NAD(+)</name>
        <dbReference type="ChEBI" id="CHEBI:57540"/>
        <note>ligand shared between two adjacent protomers</note>
    </ligand>
</feature>
<feature type="binding site" description="in other chain" evidence="1">
    <location>
        <begin position="59"/>
        <end position="60"/>
    </location>
    <ligand>
        <name>NAD(+)</name>
        <dbReference type="ChEBI" id="CHEBI:57540"/>
        <note>ligand shared between two adjacent protomers</note>
    </ligand>
</feature>
<feature type="binding site" description="in other chain" evidence="1">
    <location>
        <position position="67"/>
    </location>
    <ligand>
        <name>NAD(+)</name>
        <dbReference type="ChEBI" id="CHEBI:57540"/>
        <note>ligand shared between two adjacent protomers</note>
    </ligand>
</feature>
<feature type="binding site" description="in other chain" evidence="1">
    <location>
        <position position="133"/>
    </location>
    <ligand>
        <name>NAD(+)</name>
        <dbReference type="ChEBI" id="CHEBI:57540"/>
        <note>ligand shared between two adjacent protomers</note>
    </ligand>
</feature>
<feature type="binding site" evidence="1">
    <location>
        <begin position="159"/>
        <end position="161"/>
    </location>
    <ligand>
        <name>NAD(+)</name>
        <dbReference type="ChEBI" id="CHEBI:57540"/>
        <note>ligand shared between two adjacent protomers</note>
    </ligand>
</feature>
<feature type="binding site" evidence="1">
    <location>
        <position position="161"/>
    </location>
    <ligand>
        <name>Fe cation</name>
        <dbReference type="ChEBI" id="CHEBI:24875"/>
        <note>ligand shared between two adjacent protomers</note>
    </ligand>
</feature>
<feature type="binding site" description="in other chain" evidence="1">
    <location>
        <position position="176"/>
    </location>
    <ligand>
        <name>Fe cation</name>
        <dbReference type="ChEBI" id="CHEBI:24875"/>
        <note>ligand shared between two adjacent protomers</note>
    </ligand>
</feature>
<feature type="binding site" description="in other chain" evidence="1">
    <location>
        <position position="179"/>
    </location>
    <ligand>
        <name>NAD(+)</name>
        <dbReference type="ChEBI" id="CHEBI:57540"/>
        <note>ligand shared between two adjacent protomers</note>
    </ligand>
</feature>
<feature type="binding site" description="in other chain" evidence="1">
    <location>
        <position position="226"/>
    </location>
    <ligand>
        <name>NAD(+)</name>
        <dbReference type="ChEBI" id="CHEBI:57540"/>
        <note>ligand shared between two adjacent protomers</note>
    </ligand>
</feature>
<feature type="binding site" evidence="1">
    <location>
        <position position="236"/>
    </location>
    <ligand>
        <name>glycine</name>
        <dbReference type="ChEBI" id="CHEBI:57305"/>
    </ligand>
</feature>
<evidence type="ECO:0000255" key="1">
    <source>
        <dbReference type="HAMAP-Rule" id="MF_00304"/>
    </source>
</evidence>